<proteinExistence type="inferred from homology"/>
<feature type="chain" id="PRO_0000067710" description="DNA-directed RNA polymerase subunit beta'">
    <location>
        <begin position="1"/>
        <end position="1345"/>
    </location>
</feature>
<feature type="binding site" evidence="1">
    <location>
        <position position="60"/>
    </location>
    <ligand>
        <name>Zn(2+)</name>
        <dbReference type="ChEBI" id="CHEBI:29105"/>
        <label>1</label>
    </ligand>
</feature>
<feature type="binding site" evidence="1">
    <location>
        <position position="62"/>
    </location>
    <ligand>
        <name>Zn(2+)</name>
        <dbReference type="ChEBI" id="CHEBI:29105"/>
        <label>1</label>
    </ligand>
</feature>
<feature type="binding site" evidence="1">
    <location>
        <position position="75"/>
    </location>
    <ligand>
        <name>Zn(2+)</name>
        <dbReference type="ChEBI" id="CHEBI:29105"/>
        <label>1</label>
    </ligand>
</feature>
<feature type="binding site" evidence="1">
    <location>
        <position position="78"/>
    </location>
    <ligand>
        <name>Zn(2+)</name>
        <dbReference type="ChEBI" id="CHEBI:29105"/>
        <label>1</label>
    </ligand>
</feature>
<feature type="binding site" evidence="1">
    <location>
        <position position="536"/>
    </location>
    <ligand>
        <name>Mg(2+)</name>
        <dbReference type="ChEBI" id="CHEBI:18420"/>
    </ligand>
</feature>
<feature type="binding site" evidence="1">
    <location>
        <position position="538"/>
    </location>
    <ligand>
        <name>Mg(2+)</name>
        <dbReference type="ChEBI" id="CHEBI:18420"/>
    </ligand>
</feature>
<feature type="binding site" evidence="1">
    <location>
        <position position="540"/>
    </location>
    <ligand>
        <name>Mg(2+)</name>
        <dbReference type="ChEBI" id="CHEBI:18420"/>
    </ligand>
</feature>
<feature type="binding site" evidence="1">
    <location>
        <position position="895"/>
    </location>
    <ligand>
        <name>Zn(2+)</name>
        <dbReference type="ChEBI" id="CHEBI:29105"/>
        <label>2</label>
    </ligand>
</feature>
<feature type="binding site" evidence="1">
    <location>
        <position position="974"/>
    </location>
    <ligand>
        <name>Zn(2+)</name>
        <dbReference type="ChEBI" id="CHEBI:29105"/>
        <label>2</label>
    </ligand>
</feature>
<feature type="binding site" evidence="1">
    <location>
        <position position="981"/>
    </location>
    <ligand>
        <name>Zn(2+)</name>
        <dbReference type="ChEBI" id="CHEBI:29105"/>
        <label>2</label>
    </ligand>
</feature>
<feature type="binding site" evidence="1">
    <location>
        <position position="984"/>
    </location>
    <ligand>
        <name>Zn(2+)</name>
        <dbReference type="ChEBI" id="CHEBI:29105"/>
        <label>2</label>
    </ligand>
</feature>
<evidence type="ECO:0000255" key="1">
    <source>
        <dbReference type="HAMAP-Rule" id="MF_01322"/>
    </source>
</evidence>
<gene>
    <name evidence="1" type="primary">rpoC</name>
    <name type="ordered locus">BL1204</name>
</gene>
<dbReference type="EC" id="2.7.7.6" evidence="1"/>
<dbReference type="EMBL" id="AE014295">
    <property type="protein sequence ID" value="AAN25010.1"/>
    <property type="molecule type" value="Genomic_DNA"/>
</dbReference>
<dbReference type="RefSeq" id="NP_696374.1">
    <property type="nucleotide sequence ID" value="NC_004307.2"/>
</dbReference>
<dbReference type="RefSeq" id="WP_007051319.1">
    <property type="nucleotide sequence ID" value="NC_004307.2"/>
</dbReference>
<dbReference type="SMR" id="Q8G515"/>
<dbReference type="STRING" id="206672.BL1204"/>
<dbReference type="EnsemblBacteria" id="AAN25010">
    <property type="protein sequence ID" value="AAN25010"/>
    <property type="gene ID" value="BL1204"/>
</dbReference>
<dbReference type="KEGG" id="blo:BL1204"/>
<dbReference type="PATRIC" id="fig|206672.9.peg.919"/>
<dbReference type="HOGENOM" id="CLU_000524_3_0_11"/>
<dbReference type="OrthoDB" id="9815296at2"/>
<dbReference type="PhylomeDB" id="Q8G515"/>
<dbReference type="Proteomes" id="UP000000439">
    <property type="component" value="Chromosome"/>
</dbReference>
<dbReference type="GO" id="GO:0000428">
    <property type="term" value="C:DNA-directed RNA polymerase complex"/>
    <property type="evidence" value="ECO:0007669"/>
    <property type="project" value="UniProtKB-KW"/>
</dbReference>
<dbReference type="GO" id="GO:0003677">
    <property type="term" value="F:DNA binding"/>
    <property type="evidence" value="ECO:0007669"/>
    <property type="project" value="UniProtKB-UniRule"/>
</dbReference>
<dbReference type="GO" id="GO:0003899">
    <property type="term" value="F:DNA-directed RNA polymerase activity"/>
    <property type="evidence" value="ECO:0007669"/>
    <property type="project" value="UniProtKB-UniRule"/>
</dbReference>
<dbReference type="GO" id="GO:0000287">
    <property type="term" value="F:magnesium ion binding"/>
    <property type="evidence" value="ECO:0007669"/>
    <property type="project" value="UniProtKB-UniRule"/>
</dbReference>
<dbReference type="GO" id="GO:0008270">
    <property type="term" value="F:zinc ion binding"/>
    <property type="evidence" value="ECO:0007669"/>
    <property type="project" value="UniProtKB-UniRule"/>
</dbReference>
<dbReference type="GO" id="GO:0006351">
    <property type="term" value="P:DNA-templated transcription"/>
    <property type="evidence" value="ECO:0007669"/>
    <property type="project" value="UniProtKB-UniRule"/>
</dbReference>
<dbReference type="CDD" id="cd02655">
    <property type="entry name" value="RNAP_beta'_C"/>
    <property type="match status" value="1"/>
</dbReference>
<dbReference type="CDD" id="cd01609">
    <property type="entry name" value="RNAP_beta'_N"/>
    <property type="match status" value="1"/>
</dbReference>
<dbReference type="FunFam" id="1.10.150.390:FF:000002">
    <property type="entry name" value="DNA-directed RNA polymerase subunit beta"/>
    <property type="match status" value="1"/>
</dbReference>
<dbReference type="FunFam" id="4.10.860.120:FF:000001">
    <property type="entry name" value="DNA-directed RNA polymerase subunit beta"/>
    <property type="match status" value="1"/>
</dbReference>
<dbReference type="Gene3D" id="1.10.132.30">
    <property type="match status" value="1"/>
</dbReference>
<dbReference type="Gene3D" id="1.10.150.390">
    <property type="match status" value="1"/>
</dbReference>
<dbReference type="Gene3D" id="1.10.1790.20">
    <property type="match status" value="1"/>
</dbReference>
<dbReference type="Gene3D" id="1.10.40.90">
    <property type="match status" value="1"/>
</dbReference>
<dbReference type="Gene3D" id="2.40.40.20">
    <property type="match status" value="1"/>
</dbReference>
<dbReference type="Gene3D" id="2.40.50.100">
    <property type="match status" value="1"/>
</dbReference>
<dbReference type="Gene3D" id="4.10.860.120">
    <property type="entry name" value="RNA polymerase II, clamp domain"/>
    <property type="match status" value="1"/>
</dbReference>
<dbReference type="Gene3D" id="1.10.274.100">
    <property type="entry name" value="RNA polymerase Rpb1, domain 3"/>
    <property type="match status" value="1"/>
</dbReference>
<dbReference type="HAMAP" id="MF_01322">
    <property type="entry name" value="RNApol_bact_RpoC"/>
    <property type="match status" value="1"/>
</dbReference>
<dbReference type="InterPro" id="IPR045867">
    <property type="entry name" value="DNA-dir_RpoC_beta_prime"/>
</dbReference>
<dbReference type="InterPro" id="IPR012754">
    <property type="entry name" value="DNA-dir_RpoC_beta_prime_bact"/>
</dbReference>
<dbReference type="InterPro" id="IPR000722">
    <property type="entry name" value="RNA_pol_asu"/>
</dbReference>
<dbReference type="InterPro" id="IPR006592">
    <property type="entry name" value="RNA_pol_N"/>
</dbReference>
<dbReference type="InterPro" id="IPR007080">
    <property type="entry name" value="RNA_pol_Rpb1_1"/>
</dbReference>
<dbReference type="InterPro" id="IPR007066">
    <property type="entry name" value="RNA_pol_Rpb1_3"/>
</dbReference>
<dbReference type="InterPro" id="IPR042102">
    <property type="entry name" value="RNA_pol_Rpb1_3_sf"/>
</dbReference>
<dbReference type="InterPro" id="IPR007083">
    <property type="entry name" value="RNA_pol_Rpb1_4"/>
</dbReference>
<dbReference type="InterPro" id="IPR007081">
    <property type="entry name" value="RNA_pol_Rpb1_5"/>
</dbReference>
<dbReference type="InterPro" id="IPR044893">
    <property type="entry name" value="RNA_pol_Rpb1_clamp_domain"/>
</dbReference>
<dbReference type="InterPro" id="IPR038120">
    <property type="entry name" value="Rpb1_funnel_sf"/>
</dbReference>
<dbReference type="NCBIfam" id="NF011498">
    <property type="entry name" value="PRK14906.1"/>
    <property type="match status" value="1"/>
</dbReference>
<dbReference type="NCBIfam" id="TIGR02386">
    <property type="entry name" value="rpoC_TIGR"/>
    <property type="match status" value="1"/>
</dbReference>
<dbReference type="PANTHER" id="PTHR19376">
    <property type="entry name" value="DNA-DIRECTED RNA POLYMERASE"/>
    <property type="match status" value="1"/>
</dbReference>
<dbReference type="PANTHER" id="PTHR19376:SF54">
    <property type="entry name" value="DNA-DIRECTED RNA POLYMERASE SUBUNIT BETA"/>
    <property type="match status" value="1"/>
</dbReference>
<dbReference type="Pfam" id="PF04997">
    <property type="entry name" value="RNA_pol_Rpb1_1"/>
    <property type="match status" value="1"/>
</dbReference>
<dbReference type="Pfam" id="PF00623">
    <property type="entry name" value="RNA_pol_Rpb1_2"/>
    <property type="match status" value="2"/>
</dbReference>
<dbReference type="Pfam" id="PF04983">
    <property type="entry name" value="RNA_pol_Rpb1_3"/>
    <property type="match status" value="1"/>
</dbReference>
<dbReference type="Pfam" id="PF05000">
    <property type="entry name" value="RNA_pol_Rpb1_4"/>
    <property type="match status" value="1"/>
</dbReference>
<dbReference type="Pfam" id="PF04998">
    <property type="entry name" value="RNA_pol_Rpb1_5"/>
    <property type="match status" value="1"/>
</dbReference>
<dbReference type="SMART" id="SM00663">
    <property type="entry name" value="RPOLA_N"/>
    <property type="match status" value="1"/>
</dbReference>
<dbReference type="SUPFAM" id="SSF64484">
    <property type="entry name" value="beta and beta-prime subunits of DNA dependent RNA-polymerase"/>
    <property type="match status" value="1"/>
</dbReference>
<reference key="1">
    <citation type="journal article" date="2002" name="Proc. Natl. Acad. Sci. U.S.A.">
        <title>The genome sequence of Bifidobacterium longum reflects its adaptation to the human gastrointestinal tract.</title>
        <authorList>
            <person name="Schell M.A."/>
            <person name="Karmirantzou M."/>
            <person name="Snel B."/>
            <person name="Vilanova D."/>
            <person name="Berger B."/>
            <person name="Pessi G."/>
            <person name="Zwahlen M.-C."/>
            <person name="Desiere F."/>
            <person name="Bork P."/>
            <person name="Delley M."/>
            <person name="Pridmore R.D."/>
            <person name="Arigoni F."/>
        </authorList>
    </citation>
    <scope>NUCLEOTIDE SEQUENCE [LARGE SCALE GENOMIC DNA]</scope>
    <source>
        <strain>NCC 2705</strain>
    </source>
</reference>
<keyword id="KW-0240">DNA-directed RNA polymerase</keyword>
<keyword id="KW-0460">Magnesium</keyword>
<keyword id="KW-0479">Metal-binding</keyword>
<keyword id="KW-0548">Nucleotidyltransferase</keyword>
<keyword id="KW-1185">Reference proteome</keyword>
<keyword id="KW-0804">Transcription</keyword>
<keyword id="KW-0808">Transferase</keyword>
<keyword id="KW-0862">Zinc</keyword>
<comment type="function">
    <text evidence="1">DNA-dependent RNA polymerase catalyzes the transcription of DNA into RNA using the four ribonucleoside triphosphates as substrates.</text>
</comment>
<comment type="catalytic activity">
    <reaction evidence="1">
        <text>RNA(n) + a ribonucleoside 5'-triphosphate = RNA(n+1) + diphosphate</text>
        <dbReference type="Rhea" id="RHEA:21248"/>
        <dbReference type="Rhea" id="RHEA-COMP:14527"/>
        <dbReference type="Rhea" id="RHEA-COMP:17342"/>
        <dbReference type="ChEBI" id="CHEBI:33019"/>
        <dbReference type="ChEBI" id="CHEBI:61557"/>
        <dbReference type="ChEBI" id="CHEBI:140395"/>
        <dbReference type="EC" id="2.7.7.6"/>
    </reaction>
</comment>
<comment type="cofactor">
    <cofactor evidence="1">
        <name>Mg(2+)</name>
        <dbReference type="ChEBI" id="CHEBI:18420"/>
    </cofactor>
    <text evidence="1">Binds 1 Mg(2+) ion per subunit.</text>
</comment>
<comment type="cofactor">
    <cofactor evidence="1">
        <name>Zn(2+)</name>
        <dbReference type="ChEBI" id="CHEBI:29105"/>
    </cofactor>
    <text evidence="1">Binds 2 Zn(2+) ions per subunit.</text>
</comment>
<comment type="subunit">
    <text evidence="1">The RNAP catalytic core consists of 2 alpha, 1 beta, 1 beta' and 1 omega subunit. When a sigma factor is associated with the core the holoenzyme is formed, which can initiate transcription.</text>
</comment>
<comment type="similarity">
    <text evidence="1">Belongs to the RNA polymerase beta' chain family.</text>
</comment>
<accession>Q8G515</accession>
<protein>
    <recommendedName>
        <fullName evidence="1">DNA-directed RNA polymerase subunit beta'</fullName>
        <shortName evidence="1">RNAP subunit beta'</shortName>
        <ecNumber evidence="1">2.7.7.6</ecNumber>
    </recommendedName>
    <alternativeName>
        <fullName evidence="1">RNA polymerase subunit beta'</fullName>
    </alternativeName>
    <alternativeName>
        <fullName evidence="1">Transcriptase subunit beta'</fullName>
    </alternativeName>
</protein>
<organism>
    <name type="scientific">Bifidobacterium longum (strain NCC 2705)</name>
    <dbReference type="NCBI Taxonomy" id="206672"/>
    <lineage>
        <taxon>Bacteria</taxon>
        <taxon>Bacillati</taxon>
        <taxon>Actinomycetota</taxon>
        <taxon>Actinomycetes</taxon>
        <taxon>Bifidobacteriales</taxon>
        <taxon>Bifidobacteriaceae</taxon>
        <taxon>Bifidobacterium</taxon>
    </lineage>
</organism>
<name>RPOC_BIFLO</name>
<sequence>MLDVNAFDKIRIGLATADDIRGWSHGEVKKPETINYRTLKPEKDGLFGEQIFGPTRDWECACGKYKRVRFKGIVCERCGVEVTRSRVRRERMGHIELAAPVTHIWFFKGVPSRLGYLLNVTPKDLERVIYFASYMVTEVNEDERHNDLPGLQDEFDSEIKRLEQRRDSDIEARAKKVEEDLAALEEAGEAKGPARTKLRNGAERDMAAIRTRYNDQIARVDAVFDKFKKLKPGDMVDDVDLWREMQDRYGDYFDGCMGAEAIKKRLQSLDLETISKELREEIKDASEQRKTKALKRLKVVNAFLTTGNKPEAMVLDVIPVIPPDLRPMVQLDGGRFATSDLNDLYRRVINRNNRLKRLIELGAPEIMLNNEKRMLQEAVDSLFDNGRRGRPVTGASNRPLKSLSDMLKGKQGRFRQNLLGKRVDYSGRSVIVVGPSLRMHQCGLPKPMALELFKPFVIKRLVDLNYAQNMKSAKRLVDRGDAEVWGVLEEVISEHPVLLNRAPTLHRLGIQAFEPILVEGKAIHLPPLACAAFNADFDGDQMAVHLPLSAEAQAEARSLMMASDNILKPADGHTVTMPSQDMILGLYYLSTVLEGVKGQGRVFSSLEEAEMALDRHEIDMQAKVLIRLPESFVLPKNWEPGEVKVLDPREGEDEVVKEERFHDGTVLFATSYGRILFNETLPTDYPFVNEQVAKGRLSKIVDDIAMRYSTQQVAATLDALKDLGFTRAPWSGVSFAFSDVNEPPERDEKIAEYEAKADKVNANYEMGLLTEEARRQELIDLWTECTAEVSKEVEEKFDPTSNLAIIVQSGARGNMMQINQIAGMRGLVANPKGEIIPRPVKSNYRDGLSVLEYFISQHGARKGLADTALRTAESGYLTRRLVDVSQDVIVREEDCGTKAGLPIRVAERDNDGNLVLVKAADGGPYSRLLAADVIDPADGQTVLYKRDDALSMDVLNDLVAHGVEEVKCRSVLTCESKRGVCAKCYGWSLATNKLVDVGETVGIVAAQSIGEPGTQLTLRSFHSGGVAAASDITQGLPRVTELFEARTPKGEAPITEFAGSIKIVENDRGRQIILTPDADSGAPKEDGVIKPITYQVSKRVPLKVADGDHIKVGTQLVEGSVDPKKILTILGKRAAQVNIVEEVHTVYRSQGVDIHDKHIEVIVHQMTRRVTIIDSGDTDLLPGELVDNARFREINRNIVKNGGRPAVGRPALMGITKASLATDSWLSAASFQETTRVLTEAALSEKVDDLKGLKENVIIGKLIPAGTGLARYRNAVVEPDKAIRDTIYPNFGLGGDGDLGDASFSDADLSDLNFSNLEFGDLKLGDDFNPDDFYSDQGGQPDIEE</sequence>